<name>EFTS_ALBFT</name>
<protein>
    <recommendedName>
        <fullName evidence="1">Elongation factor Ts</fullName>
        <shortName evidence="1">EF-Ts</shortName>
    </recommendedName>
</protein>
<accession>Q21WY8</accession>
<dbReference type="EMBL" id="CP000267">
    <property type="protein sequence ID" value="ABD69715.1"/>
    <property type="molecule type" value="Genomic_DNA"/>
</dbReference>
<dbReference type="RefSeq" id="WP_011464283.1">
    <property type="nucleotide sequence ID" value="NC_007908.1"/>
</dbReference>
<dbReference type="SMR" id="Q21WY8"/>
<dbReference type="STRING" id="338969.Rfer_1990"/>
<dbReference type="KEGG" id="rfr:Rfer_1990"/>
<dbReference type="eggNOG" id="COG0264">
    <property type="taxonomic scope" value="Bacteria"/>
</dbReference>
<dbReference type="HOGENOM" id="CLU_047155_0_2_4"/>
<dbReference type="OrthoDB" id="9808348at2"/>
<dbReference type="Proteomes" id="UP000008332">
    <property type="component" value="Chromosome"/>
</dbReference>
<dbReference type="GO" id="GO:0005737">
    <property type="term" value="C:cytoplasm"/>
    <property type="evidence" value="ECO:0007669"/>
    <property type="project" value="UniProtKB-SubCell"/>
</dbReference>
<dbReference type="GO" id="GO:0003746">
    <property type="term" value="F:translation elongation factor activity"/>
    <property type="evidence" value="ECO:0007669"/>
    <property type="project" value="UniProtKB-UniRule"/>
</dbReference>
<dbReference type="CDD" id="cd14275">
    <property type="entry name" value="UBA_EF-Ts"/>
    <property type="match status" value="1"/>
</dbReference>
<dbReference type="FunFam" id="1.10.8.10:FF:000001">
    <property type="entry name" value="Elongation factor Ts"/>
    <property type="match status" value="1"/>
</dbReference>
<dbReference type="Gene3D" id="1.10.286.20">
    <property type="match status" value="1"/>
</dbReference>
<dbReference type="Gene3D" id="1.10.8.10">
    <property type="entry name" value="DNA helicase RuvA subunit, C-terminal domain"/>
    <property type="match status" value="1"/>
</dbReference>
<dbReference type="Gene3D" id="3.30.479.20">
    <property type="entry name" value="Elongation factor Ts, dimerisation domain"/>
    <property type="match status" value="2"/>
</dbReference>
<dbReference type="HAMAP" id="MF_00050">
    <property type="entry name" value="EF_Ts"/>
    <property type="match status" value="1"/>
</dbReference>
<dbReference type="InterPro" id="IPR036402">
    <property type="entry name" value="EF-Ts_dimer_sf"/>
</dbReference>
<dbReference type="InterPro" id="IPR001816">
    <property type="entry name" value="Transl_elong_EFTs/EF1B"/>
</dbReference>
<dbReference type="InterPro" id="IPR014039">
    <property type="entry name" value="Transl_elong_EFTs/EF1B_dimer"/>
</dbReference>
<dbReference type="InterPro" id="IPR018101">
    <property type="entry name" value="Transl_elong_Ts_CS"/>
</dbReference>
<dbReference type="InterPro" id="IPR009060">
    <property type="entry name" value="UBA-like_sf"/>
</dbReference>
<dbReference type="NCBIfam" id="TIGR00116">
    <property type="entry name" value="tsf"/>
    <property type="match status" value="1"/>
</dbReference>
<dbReference type="PANTHER" id="PTHR11741">
    <property type="entry name" value="ELONGATION FACTOR TS"/>
    <property type="match status" value="1"/>
</dbReference>
<dbReference type="PANTHER" id="PTHR11741:SF0">
    <property type="entry name" value="ELONGATION FACTOR TS, MITOCHONDRIAL"/>
    <property type="match status" value="1"/>
</dbReference>
<dbReference type="Pfam" id="PF00889">
    <property type="entry name" value="EF_TS"/>
    <property type="match status" value="1"/>
</dbReference>
<dbReference type="SUPFAM" id="SSF54713">
    <property type="entry name" value="Elongation factor Ts (EF-Ts), dimerisation domain"/>
    <property type="match status" value="2"/>
</dbReference>
<dbReference type="SUPFAM" id="SSF46934">
    <property type="entry name" value="UBA-like"/>
    <property type="match status" value="1"/>
</dbReference>
<dbReference type="PROSITE" id="PS01127">
    <property type="entry name" value="EF_TS_2"/>
    <property type="match status" value="1"/>
</dbReference>
<proteinExistence type="inferred from homology"/>
<comment type="function">
    <text evidence="1">Associates with the EF-Tu.GDP complex and induces the exchange of GDP to GTP. It remains bound to the aminoacyl-tRNA.EF-Tu.GTP complex up to the GTP hydrolysis stage on the ribosome.</text>
</comment>
<comment type="subcellular location">
    <subcellularLocation>
        <location evidence="1">Cytoplasm</location>
    </subcellularLocation>
</comment>
<comment type="similarity">
    <text evidence="1">Belongs to the EF-Ts family.</text>
</comment>
<sequence length="307" mass="32308">MAAITASMVAELRGKTDAPMMECKRALTEAQGDMVKAEELLRVKLGSKAGKAAGRITAEGVITSYMEADVGALLEVNCETDFVTKNDSFLALANAAVKLIAQNNPADLAALAALPYTQDGFGPTLEDVRKGLIGKIGENMSFRRFKRFASGAKLASYLHGTRIGVVVEFDGDATAAKDVAMHVAAMKPVALSSDDVPAELVARERSVAAAKAAEDASVATAAGKPVQSAEIVAKRIEGGVQKYLKEVSLFNQSFVKNDKQTVEQMLKATGTTVKAFTLYVVGEGIEKKVEDFAAEVAAQMAAAKQAS</sequence>
<reference key="1">
    <citation type="submission" date="2006-02" db="EMBL/GenBank/DDBJ databases">
        <title>Complete sequence of chromosome of Rhodoferax ferrireducens DSM 15236.</title>
        <authorList>
            <person name="Copeland A."/>
            <person name="Lucas S."/>
            <person name="Lapidus A."/>
            <person name="Barry K."/>
            <person name="Detter J.C."/>
            <person name="Glavina del Rio T."/>
            <person name="Hammon N."/>
            <person name="Israni S."/>
            <person name="Pitluck S."/>
            <person name="Brettin T."/>
            <person name="Bruce D."/>
            <person name="Han C."/>
            <person name="Tapia R."/>
            <person name="Gilna P."/>
            <person name="Kiss H."/>
            <person name="Schmutz J."/>
            <person name="Larimer F."/>
            <person name="Land M."/>
            <person name="Kyrpides N."/>
            <person name="Ivanova N."/>
            <person name="Richardson P."/>
        </authorList>
    </citation>
    <scope>NUCLEOTIDE SEQUENCE [LARGE SCALE GENOMIC DNA]</scope>
    <source>
        <strain>ATCC BAA-621 / DSM 15236 / T118</strain>
    </source>
</reference>
<feature type="chain" id="PRO_0000241517" description="Elongation factor Ts">
    <location>
        <begin position="1"/>
        <end position="307"/>
    </location>
</feature>
<feature type="region of interest" description="Involved in Mg(2+) ion dislocation from EF-Tu" evidence="1">
    <location>
        <begin position="80"/>
        <end position="83"/>
    </location>
</feature>
<evidence type="ECO:0000255" key="1">
    <source>
        <dbReference type="HAMAP-Rule" id="MF_00050"/>
    </source>
</evidence>
<gene>
    <name evidence="1" type="primary">tsf</name>
    <name type="ordered locus">Rfer_1990</name>
</gene>
<keyword id="KW-0963">Cytoplasm</keyword>
<keyword id="KW-0251">Elongation factor</keyword>
<keyword id="KW-0648">Protein biosynthesis</keyword>
<keyword id="KW-1185">Reference proteome</keyword>
<organism>
    <name type="scientific">Albidiferax ferrireducens (strain ATCC BAA-621 / DSM 15236 / T118)</name>
    <name type="common">Rhodoferax ferrireducens</name>
    <dbReference type="NCBI Taxonomy" id="338969"/>
    <lineage>
        <taxon>Bacteria</taxon>
        <taxon>Pseudomonadati</taxon>
        <taxon>Pseudomonadota</taxon>
        <taxon>Betaproteobacteria</taxon>
        <taxon>Burkholderiales</taxon>
        <taxon>Comamonadaceae</taxon>
        <taxon>Rhodoferax</taxon>
    </lineage>
</organism>